<organism>
    <name type="scientific">Shewanella oneidensis (strain ATCC 700550 / JCM 31522 / CIP 106686 / LMG 19005 / NCIMB 14063 / MR-1)</name>
    <dbReference type="NCBI Taxonomy" id="211586"/>
    <lineage>
        <taxon>Bacteria</taxon>
        <taxon>Pseudomonadati</taxon>
        <taxon>Pseudomonadota</taxon>
        <taxon>Gammaproteobacteria</taxon>
        <taxon>Alteromonadales</taxon>
        <taxon>Shewanellaceae</taxon>
        <taxon>Shewanella</taxon>
    </lineage>
</organism>
<reference key="1">
    <citation type="journal article" date="2002" name="Nat. Biotechnol.">
        <title>Genome sequence of the dissimilatory metal ion-reducing bacterium Shewanella oneidensis.</title>
        <authorList>
            <person name="Heidelberg J.F."/>
            <person name="Paulsen I.T."/>
            <person name="Nelson K.E."/>
            <person name="Gaidos E.J."/>
            <person name="Nelson W.C."/>
            <person name="Read T.D."/>
            <person name="Eisen J.A."/>
            <person name="Seshadri R."/>
            <person name="Ward N.L."/>
            <person name="Methe B.A."/>
            <person name="Clayton R.A."/>
            <person name="Meyer T."/>
            <person name="Tsapin A."/>
            <person name="Scott J."/>
            <person name="Beanan M.J."/>
            <person name="Brinkac L.M."/>
            <person name="Daugherty S.C."/>
            <person name="DeBoy R.T."/>
            <person name="Dodson R.J."/>
            <person name="Durkin A.S."/>
            <person name="Haft D.H."/>
            <person name="Kolonay J.F."/>
            <person name="Madupu R."/>
            <person name="Peterson J.D."/>
            <person name="Umayam L.A."/>
            <person name="White O."/>
            <person name="Wolf A.M."/>
            <person name="Vamathevan J.J."/>
            <person name="Weidman J.F."/>
            <person name="Impraim M."/>
            <person name="Lee K."/>
            <person name="Berry K.J."/>
            <person name="Lee C."/>
            <person name="Mueller J."/>
            <person name="Khouri H.M."/>
            <person name="Gill J."/>
            <person name="Utterback T.R."/>
            <person name="McDonald L.A."/>
            <person name="Feldblyum T.V."/>
            <person name="Smith H.O."/>
            <person name="Venter J.C."/>
            <person name="Nealson K.H."/>
            <person name="Fraser C.M."/>
        </authorList>
    </citation>
    <scope>NUCLEOTIDE SEQUENCE [LARGE SCALE GENOMIC DNA]</scope>
    <source>
        <strain>ATCC 700550 / JCM 31522 / CIP 106686 / LMG 19005 / NCIMB 14063 / MR-1</strain>
    </source>
</reference>
<evidence type="ECO:0000255" key="1">
    <source>
        <dbReference type="HAMAP-Rule" id="MF_01579"/>
    </source>
</evidence>
<comment type="function">
    <text evidence="1">Specifically methylates the cytosine at position 1407 (m5C1407) of 16S rRNA.</text>
</comment>
<comment type="catalytic activity">
    <reaction evidence="1">
        <text>cytidine(1407) in 16S rRNA + S-adenosyl-L-methionine = 5-methylcytidine(1407) in 16S rRNA + S-adenosyl-L-homocysteine + H(+)</text>
        <dbReference type="Rhea" id="RHEA:42756"/>
        <dbReference type="Rhea" id="RHEA-COMP:10223"/>
        <dbReference type="Rhea" id="RHEA-COMP:10224"/>
        <dbReference type="ChEBI" id="CHEBI:15378"/>
        <dbReference type="ChEBI" id="CHEBI:57856"/>
        <dbReference type="ChEBI" id="CHEBI:59789"/>
        <dbReference type="ChEBI" id="CHEBI:74483"/>
        <dbReference type="ChEBI" id="CHEBI:82748"/>
        <dbReference type="EC" id="2.1.1.178"/>
    </reaction>
</comment>
<comment type="subcellular location">
    <subcellularLocation>
        <location evidence="1">Cytoplasm</location>
    </subcellularLocation>
</comment>
<comment type="similarity">
    <text evidence="1">Belongs to the class I-like SAM-binding methyltransferase superfamily. RsmB/NOP family.</text>
</comment>
<dbReference type="EC" id="2.1.1.178" evidence="1"/>
<dbReference type="EMBL" id="AE014299">
    <property type="protein sequence ID" value="AAN55638.1"/>
    <property type="molecule type" value="Genomic_DNA"/>
</dbReference>
<dbReference type="RefSeq" id="NP_718194.1">
    <property type="nucleotide sequence ID" value="NC_004347.2"/>
</dbReference>
<dbReference type="RefSeq" id="WP_011072558.1">
    <property type="nucleotide sequence ID" value="NC_004347.2"/>
</dbReference>
<dbReference type="SMR" id="Q8EDY2"/>
<dbReference type="STRING" id="211586.SO_2609"/>
<dbReference type="PaxDb" id="211586-SO_2609"/>
<dbReference type="KEGG" id="son:SO_2609"/>
<dbReference type="PATRIC" id="fig|211586.12.peg.2512"/>
<dbReference type="eggNOG" id="COG0144">
    <property type="taxonomic scope" value="Bacteria"/>
</dbReference>
<dbReference type="eggNOG" id="COG3270">
    <property type="taxonomic scope" value="Bacteria"/>
</dbReference>
<dbReference type="HOGENOM" id="CLU_005316_6_2_6"/>
<dbReference type="OrthoDB" id="9810297at2"/>
<dbReference type="PhylomeDB" id="Q8EDY2"/>
<dbReference type="BioCyc" id="SONE211586:G1GMP-2393-MONOMER"/>
<dbReference type="Proteomes" id="UP000008186">
    <property type="component" value="Chromosome"/>
</dbReference>
<dbReference type="GO" id="GO:0005737">
    <property type="term" value="C:cytoplasm"/>
    <property type="evidence" value="ECO:0007669"/>
    <property type="project" value="UniProtKB-SubCell"/>
</dbReference>
<dbReference type="GO" id="GO:0003723">
    <property type="term" value="F:RNA binding"/>
    <property type="evidence" value="ECO:0007669"/>
    <property type="project" value="UniProtKB-KW"/>
</dbReference>
<dbReference type="GO" id="GO:0009383">
    <property type="term" value="F:rRNA (cytosine-C5-)-methyltransferase activity"/>
    <property type="evidence" value="ECO:0000318"/>
    <property type="project" value="GO_Central"/>
</dbReference>
<dbReference type="GO" id="GO:0070475">
    <property type="term" value="P:rRNA base methylation"/>
    <property type="evidence" value="ECO:0000318"/>
    <property type="project" value="GO_Central"/>
</dbReference>
<dbReference type="CDD" id="cd02440">
    <property type="entry name" value="AdoMet_MTases"/>
    <property type="match status" value="1"/>
</dbReference>
<dbReference type="FunFam" id="3.40.50.150:FF:000079">
    <property type="entry name" value="Ribosomal RNA small subunit methyltransferase F"/>
    <property type="match status" value="1"/>
</dbReference>
<dbReference type="Gene3D" id="3.10.450.720">
    <property type="match status" value="1"/>
</dbReference>
<dbReference type="Gene3D" id="3.40.50.150">
    <property type="entry name" value="Vaccinia Virus protein VP39"/>
    <property type="match status" value="1"/>
</dbReference>
<dbReference type="HAMAP" id="MF_01579">
    <property type="entry name" value="16SrRNA_methyltr_F"/>
    <property type="match status" value="1"/>
</dbReference>
<dbReference type="InterPro" id="IPR031341">
    <property type="entry name" value="Methyltr_RsmF_N"/>
</dbReference>
<dbReference type="InterPro" id="IPR049560">
    <property type="entry name" value="MeTrfase_RsmB-F_NOP2_cat"/>
</dbReference>
<dbReference type="InterPro" id="IPR001678">
    <property type="entry name" value="MeTrfase_RsmB-F_NOP2_dom"/>
</dbReference>
<dbReference type="InterPro" id="IPR027391">
    <property type="entry name" value="Nol1_Nop2_Fmu_2"/>
</dbReference>
<dbReference type="InterPro" id="IPR011023">
    <property type="entry name" value="Nop2p"/>
</dbReference>
<dbReference type="InterPro" id="IPR023267">
    <property type="entry name" value="RCMT"/>
</dbReference>
<dbReference type="InterPro" id="IPR023545">
    <property type="entry name" value="rRNA_ssu_MeTfrase_F"/>
</dbReference>
<dbReference type="InterPro" id="IPR029063">
    <property type="entry name" value="SAM-dependent_MTases_sf"/>
</dbReference>
<dbReference type="InterPro" id="IPR048457">
    <property type="entry name" value="YebU_pre-PUA_dom"/>
</dbReference>
<dbReference type="NCBIfam" id="TIGR00446">
    <property type="entry name" value="nop2p"/>
    <property type="match status" value="1"/>
</dbReference>
<dbReference type="NCBIfam" id="NF008898">
    <property type="entry name" value="PRK11933.1"/>
    <property type="match status" value="1"/>
</dbReference>
<dbReference type="PANTHER" id="PTHR22807:SF30">
    <property type="entry name" value="28S RRNA (CYTOSINE(4447)-C(5))-METHYLTRANSFERASE-RELATED"/>
    <property type="match status" value="1"/>
</dbReference>
<dbReference type="PANTHER" id="PTHR22807">
    <property type="entry name" value="NOP2 YEAST -RELATED NOL1/NOP2/FMU SUN DOMAIN-CONTAINING"/>
    <property type="match status" value="1"/>
</dbReference>
<dbReference type="Pfam" id="PF01189">
    <property type="entry name" value="Methyltr_RsmB-F"/>
    <property type="match status" value="1"/>
</dbReference>
<dbReference type="Pfam" id="PF17125">
    <property type="entry name" value="Methyltr_RsmF_N"/>
    <property type="match status" value="1"/>
</dbReference>
<dbReference type="Pfam" id="PF13636">
    <property type="entry name" value="Methyltranf_PUA"/>
    <property type="match status" value="1"/>
</dbReference>
<dbReference type="Pfam" id="PF21150">
    <property type="entry name" value="YebU_pre-PUA_dom"/>
    <property type="match status" value="1"/>
</dbReference>
<dbReference type="PRINTS" id="PR02008">
    <property type="entry name" value="RCMTFAMILY"/>
</dbReference>
<dbReference type="SUPFAM" id="SSF53335">
    <property type="entry name" value="S-adenosyl-L-methionine-dependent methyltransferases"/>
    <property type="match status" value="1"/>
</dbReference>
<dbReference type="PROSITE" id="PS51686">
    <property type="entry name" value="SAM_MT_RSMB_NOP"/>
    <property type="match status" value="1"/>
</dbReference>
<feature type="chain" id="PRO_0000285012" description="Ribosomal RNA small subunit methyltransferase F">
    <location>
        <begin position="1"/>
        <end position="474"/>
    </location>
</feature>
<feature type="active site" description="Nucleophile" evidence="1">
    <location>
        <position position="241"/>
    </location>
</feature>
<feature type="binding site" evidence="1">
    <location>
        <begin position="119"/>
        <end position="125"/>
    </location>
    <ligand>
        <name>S-adenosyl-L-methionine</name>
        <dbReference type="ChEBI" id="CHEBI:59789"/>
    </ligand>
</feature>
<feature type="binding site" evidence="1">
    <location>
        <position position="143"/>
    </location>
    <ligand>
        <name>S-adenosyl-L-methionine</name>
        <dbReference type="ChEBI" id="CHEBI:59789"/>
    </ligand>
</feature>
<feature type="binding site" evidence="1">
    <location>
        <position position="170"/>
    </location>
    <ligand>
        <name>S-adenosyl-L-methionine</name>
        <dbReference type="ChEBI" id="CHEBI:59789"/>
    </ligand>
</feature>
<feature type="binding site" evidence="1">
    <location>
        <position position="188"/>
    </location>
    <ligand>
        <name>S-adenosyl-L-methionine</name>
        <dbReference type="ChEBI" id="CHEBI:59789"/>
    </ligand>
</feature>
<accession>Q8EDY2</accession>
<gene>
    <name evidence="1" type="primary">rsmF</name>
    <name type="ordered locus">SO_2609</name>
</gene>
<sequence>MVQLNPNFINTISQELPAHLSMDEFIAACARPLRRSIRVNTLKISSEDFKRLMQPKGWTFEPIPWCKDGFWISYDEEEQLGNALEHIQGLFYIQEASSMLPPTALFTPNADWQCVLDLAAAPGSKTTQMAALMNNQGLLVANEYSASRVKVLHANVLRMGASHCALTHFDGRVFGEYLYESFDAVLIDAPCGGEGTVRKDVDALKSWSLDEVIAISETQKALIESAFLALKPGGSLVYSTCTLNRHENQGVCEYLQQTYGNAVQFESLSQLFDGADKATTPEGFLHVWPQIYDSEGFFVAKLTKTRSVPRLQLEPKLQKNFPFTEASPKQAKAIQAYFADDLGIELPDELIMVRDDEFWLFPREFTDFIGKMRFQRIGLKLADHSKHGFKVRHEAVIALANTQANIIEINDEQAKEYLMGRDIALDTATKAQGEIIVCYGGAPLGMAKHLGNKLKNNLPRDLVKDKVLLLPSQA</sequence>
<protein>
    <recommendedName>
        <fullName evidence="1">Ribosomal RNA small subunit methyltransferase F</fullName>
        <ecNumber evidence="1">2.1.1.178</ecNumber>
    </recommendedName>
    <alternativeName>
        <fullName evidence="1">16S rRNA m5C1407 methyltransferase</fullName>
    </alternativeName>
    <alternativeName>
        <fullName evidence="1">rRNA (cytosine-C(5)-)-methyltransferase RsmF</fullName>
    </alternativeName>
</protein>
<proteinExistence type="inferred from homology"/>
<name>RSMF_SHEON</name>
<keyword id="KW-0963">Cytoplasm</keyword>
<keyword id="KW-0489">Methyltransferase</keyword>
<keyword id="KW-1185">Reference proteome</keyword>
<keyword id="KW-0694">RNA-binding</keyword>
<keyword id="KW-0698">rRNA processing</keyword>
<keyword id="KW-0949">S-adenosyl-L-methionine</keyword>
<keyword id="KW-0808">Transferase</keyword>